<organism>
    <name type="scientific">Mycobacterium bovis (strain BCG / Tokyo 172 / ATCC 35737 / TMC 1019)</name>
    <dbReference type="NCBI Taxonomy" id="561275"/>
    <lineage>
        <taxon>Bacteria</taxon>
        <taxon>Bacillati</taxon>
        <taxon>Actinomycetota</taxon>
        <taxon>Actinomycetes</taxon>
        <taxon>Mycobacteriales</taxon>
        <taxon>Mycobacteriaceae</taxon>
        <taxon>Mycobacterium</taxon>
        <taxon>Mycobacterium tuberculosis complex</taxon>
    </lineage>
</organism>
<keyword id="KW-0067">ATP-binding</keyword>
<keyword id="KW-0963">Cytoplasm</keyword>
<keyword id="KW-0418">Kinase</keyword>
<keyword id="KW-0545">Nucleotide biosynthesis</keyword>
<keyword id="KW-0547">Nucleotide-binding</keyword>
<keyword id="KW-0808">Transferase</keyword>
<comment type="function">
    <text evidence="1">Catalyzes the reversible transfer of the terminal phosphate group between ATP and AMP. Plays an important role in cellular energy homeostasis and in adenine nucleotide metabolism.</text>
</comment>
<comment type="catalytic activity">
    <reaction evidence="1">
        <text>AMP + ATP = 2 ADP</text>
        <dbReference type="Rhea" id="RHEA:12973"/>
        <dbReference type="ChEBI" id="CHEBI:30616"/>
        <dbReference type="ChEBI" id="CHEBI:456215"/>
        <dbReference type="ChEBI" id="CHEBI:456216"/>
        <dbReference type="EC" id="2.7.4.3"/>
    </reaction>
</comment>
<comment type="pathway">
    <text evidence="1">Purine metabolism; AMP biosynthesis via salvage pathway; AMP from ADP: step 1/1.</text>
</comment>
<comment type="subunit">
    <text evidence="1">Monomer.</text>
</comment>
<comment type="subcellular location">
    <subcellularLocation>
        <location evidence="1">Cytoplasm</location>
    </subcellularLocation>
</comment>
<comment type="domain">
    <text evidence="1">Consists of three domains, a large central CORE domain and two small peripheral domains, NMPbind and LID, which undergo movements during catalysis. The LID domain closes over the site of phosphoryl transfer upon ATP binding. Assembling and dissambling the active center during each catalytic cycle provides an effective means to prevent ATP hydrolysis.</text>
</comment>
<comment type="similarity">
    <text evidence="1">Belongs to the adenylate kinase family.</text>
</comment>
<dbReference type="EC" id="2.7.4.3" evidence="1"/>
<dbReference type="EMBL" id="AP010918">
    <property type="protein sequence ID" value="BAH25046.1"/>
    <property type="molecule type" value="Genomic_DNA"/>
</dbReference>
<dbReference type="RefSeq" id="WP_003403726.1">
    <property type="nucleotide sequence ID" value="NZ_CP014566.1"/>
</dbReference>
<dbReference type="BMRB" id="C1AL67"/>
<dbReference type="SMR" id="C1AL67"/>
<dbReference type="KEGG" id="mbt:JTY_0753"/>
<dbReference type="HOGENOM" id="CLU_032354_4_1_11"/>
<dbReference type="UniPathway" id="UPA00588">
    <property type="reaction ID" value="UER00649"/>
</dbReference>
<dbReference type="GO" id="GO:0005737">
    <property type="term" value="C:cytoplasm"/>
    <property type="evidence" value="ECO:0007669"/>
    <property type="project" value="UniProtKB-SubCell"/>
</dbReference>
<dbReference type="GO" id="GO:0004017">
    <property type="term" value="F:adenylate kinase activity"/>
    <property type="evidence" value="ECO:0007669"/>
    <property type="project" value="UniProtKB-UniRule"/>
</dbReference>
<dbReference type="GO" id="GO:0005524">
    <property type="term" value="F:ATP binding"/>
    <property type="evidence" value="ECO:0007669"/>
    <property type="project" value="UniProtKB-UniRule"/>
</dbReference>
<dbReference type="GO" id="GO:0044209">
    <property type="term" value="P:AMP salvage"/>
    <property type="evidence" value="ECO:0007669"/>
    <property type="project" value="UniProtKB-UniRule"/>
</dbReference>
<dbReference type="CDD" id="cd01428">
    <property type="entry name" value="ADK"/>
    <property type="match status" value="1"/>
</dbReference>
<dbReference type="FunFam" id="3.40.50.300:FF:002170">
    <property type="entry name" value="Adenylate kinase"/>
    <property type="match status" value="1"/>
</dbReference>
<dbReference type="Gene3D" id="3.40.50.300">
    <property type="entry name" value="P-loop containing nucleotide triphosphate hydrolases"/>
    <property type="match status" value="1"/>
</dbReference>
<dbReference type="HAMAP" id="MF_00235">
    <property type="entry name" value="Adenylate_kinase_Adk"/>
    <property type="match status" value="1"/>
</dbReference>
<dbReference type="InterPro" id="IPR000850">
    <property type="entry name" value="Adenylat/UMP-CMP_kin"/>
</dbReference>
<dbReference type="InterPro" id="IPR033690">
    <property type="entry name" value="Adenylat_kinase_CS"/>
</dbReference>
<dbReference type="InterPro" id="IPR027417">
    <property type="entry name" value="P-loop_NTPase"/>
</dbReference>
<dbReference type="NCBIfam" id="NF001381">
    <property type="entry name" value="PRK00279.1-3"/>
    <property type="match status" value="1"/>
</dbReference>
<dbReference type="NCBIfam" id="NF011100">
    <property type="entry name" value="PRK14527.1"/>
    <property type="match status" value="1"/>
</dbReference>
<dbReference type="NCBIfam" id="NF011104">
    <property type="entry name" value="PRK14531.1"/>
    <property type="match status" value="1"/>
</dbReference>
<dbReference type="NCBIfam" id="NF011105">
    <property type="entry name" value="PRK14532.1"/>
    <property type="match status" value="1"/>
</dbReference>
<dbReference type="PANTHER" id="PTHR23359">
    <property type="entry name" value="NUCLEOTIDE KINASE"/>
    <property type="match status" value="1"/>
</dbReference>
<dbReference type="Pfam" id="PF00406">
    <property type="entry name" value="ADK"/>
    <property type="match status" value="1"/>
</dbReference>
<dbReference type="PRINTS" id="PR00094">
    <property type="entry name" value="ADENYLTKNASE"/>
</dbReference>
<dbReference type="SUPFAM" id="SSF52540">
    <property type="entry name" value="P-loop containing nucleoside triphosphate hydrolases"/>
    <property type="match status" value="1"/>
</dbReference>
<dbReference type="PROSITE" id="PS00113">
    <property type="entry name" value="ADENYLATE_KINASE"/>
    <property type="match status" value="1"/>
</dbReference>
<accession>C1AL67</accession>
<sequence length="181" mass="20125">MRVLLLGPPGAGKGTQAVKLAEKLGIPQISTGELFRRNIEEGTKLGVEAKRYLDAGDLVPSDLTNELVDDRLNNPDAANGFILDGYPRSVEQAKALHEMLERRGTDIDAVLEFRVSEEVLLERLKGRGRADDTDDVILNRMKVYRDETAPLLEYYRDQLKTVDAVGTMDEVFARALRALGK</sequence>
<protein>
    <recommendedName>
        <fullName evidence="1">Adenylate kinase</fullName>
        <shortName evidence="1">AK</shortName>
        <ecNumber evidence="1">2.7.4.3</ecNumber>
    </recommendedName>
    <alternativeName>
        <fullName evidence="1">ATP-AMP transphosphorylase</fullName>
    </alternativeName>
    <alternativeName>
        <fullName evidence="1">ATP:AMP phosphotransferase</fullName>
    </alternativeName>
    <alternativeName>
        <fullName evidence="1">Adenylate monophosphate kinase</fullName>
    </alternativeName>
</protein>
<evidence type="ECO:0000255" key="1">
    <source>
        <dbReference type="HAMAP-Rule" id="MF_00235"/>
    </source>
</evidence>
<name>KAD_MYCBT</name>
<reference key="1">
    <citation type="journal article" date="2009" name="Vaccine">
        <title>Whole genome sequence analysis of Mycobacterium bovis bacillus Calmette-Guerin (BCG) Tokyo 172: a comparative study of BCG vaccine substrains.</title>
        <authorList>
            <person name="Seki M."/>
            <person name="Honda I."/>
            <person name="Fujita I."/>
            <person name="Yano I."/>
            <person name="Yamamoto S."/>
            <person name="Koyama A."/>
        </authorList>
    </citation>
    <scope>NUCLEOTIDE SEQUENCE [LARGE SCALE GENOMIC DNA]</scope>
    <source>
        <strain>BCG / Tokyo 172 / ATCC 35737 / TMC 1019</strain>
    </source>
</reference>
<feature type="chain" id="PRO_1000191156" description="Adenylate kinase">
    <location>
        <begin position="1"/>
        <end position="181"/>
    </location>
</feature>
<feature type="region of interest" description="NMP" evidence="1">
    <location>
        <begin position="30"/>
        <end position="59"/>
    </location>
</feature>
<feature type="region of interest" description="LID" evidence="1">
    <location>
        <begin position="126"/>
        <end position="132"/>
    </location>
</feature>
<feature type="binding site" evidence="1">
    <location>
        <begin position="10"/>
        <end position="15"/>
    </location>
    <ligand>
        <name>ATP</name>
        <dbReference type="ChEBI" id="CHEBI:30616"/>
    </ligand>
</feature>
<feature type="binding site" evidence="1">
    <location>
        <position position="31"/>
    </location>
    <ligand>
        <name>AMP</name>
        <dbReference type="ChEBI" id="CHEBI:456215"/>
    </ligand>
</feature>
<feature type="binding site" evidence="1">
    <location>
        <position position="36"/>
    </location>
    <ligand>
        <name>AMP</name>
        <dbReference type="ChEBI" id="CHEBI:456215"/>
    </ligand>
</feature>
<feature type="binding site" evidence="1">
    <location>
        <begin position="57"/>
        <end position="59"/>
    </location>
    <ligand>
        <name>AMP</name>
        <dbReference type="ChEBI" id="CHEBI:456215"/>
    </ligand>
</feature>
<feature type="binding site" evidence="1">
    <location>
        <begin position="85"/>
        <end position="88"/>
    </location>
    <ligand>
        <name>AMP</name>
        <dbReference type="ChEBI" id="CHEBI:456215"/>
    </ligand>
</feature>
<feature type="binding site" evidence="1">
    <location>
        <position position="92"/>
    </location>
    <ligand>
        <name>AMP</name>
        <dbReference type="ChEBI" id="CHEBI:456215"/>
    </ligand>
</feature>
<feature type="binding site" evidence="1">
    <location>
        <position position="127"/>
    </location>
    <ligand>
        <name>ATP</name>
        <dbReference type="ChEBI" id="CHEBI:30616"/>
    </ligand>
</feature>
<feature type="binding site" evidence="1">
    <location>
        <position position="129"/>
    </location>
    <ligand>
        <name>AMP</name>
        <dbReference type="ChEBI" id="CHEBI:456215"/>
    </ligand>
</feature>
<feature type="binding site" evidence="1">
    <location>
        <position position="140"/>
    </location>
    <ligand>
        <name>AMP</name>
        <dbReference type="ChEBI" id="CHEBI:456215"/>
    </ligand>
</feature>
<feature type="binding site" evidence="1">
    <location>
        <position position="166"/>
    </location>
    <ligand>
        <name>ATP</name>
        <dbReference type="ChEBI" id="CHEBI:30616"/>
    </ligand>
</feature>
<proteinExistence type="inferred from homology"/>
<gene>
    <name evidence="1" type="primary">adk</name>
    <name type="ordered locus">JTY_0753</name>
</gene>